<comment type="function">
    <text evidence="1">Plays a major role in the induction and maintenance of cellular transformation. E6 associates with host UBE3A/E6-AP ubiquitin-protein ligase and modulates its activity. Protects host keratinocytes from apoptosis by mediating the degradation of host BAK1. May also inhibit host immune response.</text>
</comment>
<comment type="subunit">
    <text evidence="1">Forms homodimers. Interacts with ubiquitin-protein ligase UBE3A/E6-AP; this interaction stimulates UBE3A ubiquitin activity. Interacts with host BAK1.</text>
</comment>
<comment type="subcellular location">
    <subcellularLocation>
        <location evidence="1">Host cytoplasm</location>
    </subcellularLocation>
    <subcellularLocation>
        <location evidence="1">Host nucleus</location>
    </subcellularLocation>
</comment>
<comment type="similarity">
    <text evidence="1 2">Belongs to the papillomaviridae E6 protein family.</text>
</comment>
<protein>
    <recommendedName>
        <fullName evidence="1">Protein E6</fullName>
    </recommendedName>
</protein>
<feature type="chain" id="PRO_0000133390" description="Protein E6">
    <location>
        <begin position="1"/>
        <end position="135"/>
    </location>
</feature>
<feature type="zinc finger region" evidence="1">
    <location>
        <begin position="11"/>
        <end position="47"/>
    </location>
</feature>
<feature type="zinc finger region" evidence="1">
    <location>
        <begin position="83"/>
        <end position="119"/>
    </location>
</feature>
<dbReference type="EMBL" id="M15953">
    <property type="protein sequence ID" value="AAA66849.1"/>
    <property type="molecule type" value="Genomic_DNA"/>
</dbReference>
<dbReference type="PIR" id="A29499">
    <property type="entry name" value="W6WLEP"/>
</dbReference>
<dbReference type="RefSeq" id="NP_041301.1">
    <property type="nucleotide sequence ID" value="NC_001524.1"/>
</dbReference>
<dbReference type="SMR" id="P11331"/>
<dbReference type="GeneID" id="1488996"/>
<dbReference type="KEGG" id="vg:1488996"/>
<dbReference type="Proteomes" id="UP000009060">
    <property type="component" value="Genome"/>
</dbReference>
<dbReference type="GO" id="GO:0030430">
    <property type="term" value="C:host cell cytoplasm"/>
    <property type="evidence" value="ECO:0007669"/>
    <property type="project" value="UniProtKB-SubCell"/>
</dbReference>
<dbReference type="GO" id="GO:0042025">
    <property type="term" value="C:host cell nucleus"/>
    <property type="evidence" value="ECO:0007669"/>
    <property type="project" value="UniProtKB-SubCell"/>
</dbReference>
<dbReference type="GO" id="GO:0003677">
    <property type="term" value="F:DNA binding"/>
    <property type="evidence" value="ECO:0007669"/>
    <property type="project" value="UniProtKB-UniRule"/>
</dbReference>
<dbReference type="GO" id="GO:0008270">
    <property type="term" value="F:zinc ion binding"/>
    <property type="evidence" value="ECO:0007669"/>
    <property type="project" value="UniProtKB-KW"/>
</dbReference>
<dbReference type="GO" id="GO:0006351">
    <property type="term" value="P:DNA-templated transcription"/>
    <property type="evidence" value="ECO:0007669"/>
    <property type="project" value="UniProtKB-UniRule"/>
</dbReference>
<dbReference type="GO" id="GO:0006355">
    <property type="term" value="P:regulation of DNA-templated transcription"/>
    <property type="evidence" value="ECO:0007669"/>
    <property type="project" value="UniProtKB-UniRule"/>
</dbReference>
<dbReference type="GO" id="GO:0052150">
    <property type="term" value="P:symbiont-mediated perturbation of host apoptosis"/>
    <property type="evidence" value="ECO:0007669"/>
    <property type="project" value="UniProtKB-KW"/>
</dbReference>
<dbReference type="GO" id="GO:0039648">
    <property type="term" value="P:symbiont-mediated perturbation of host ubiquitin-like protein modification"/>
    <property type="evidence" value="ECO:0007669"/>
    <property type="project" value="UniProtKB-UniRule"/>
</dbReference>
<dbReference type="GO" id="GO:0052170">
    <property type="term" value="P:symbiont-mediated suppression of host innate immune response"/>
    <property type="evidence" value="ECO:0007669"/>
    <property type="project" value="UniProtKB-KW"/>
</dbReference>
<dbReference type="GO" id="GO:0039502">
    <property type="term" value="P:symbiont-mediated suppression of host type I interferon-mediated signaling pathway"/>
    <property type="evidence" value="ECO:0007669"/>
    <property type="project" value="UniProtKB-UniRule"/>
</dbReference>
<dbReference type="Gene3D" id="3.30.240.40">
    <property type="entry name" value="E6 early regulatory protein"/>
    <property type="match status" value="2"/>
</dbReference>
<dbReference type="HAMAP" id="MF_04006">
    <property type="entry name" value="HPV_E6"/>
    <property type="match status" value="1"/>
</dbReference>
<dbReference type="InterPro" id="IPR001334">
    <property type="entry name" value="E6"/>
</dbReference>
<dbReference type="InterPro" id="IPR038575">
    <property type="entry name" value="E6_sf"/>
</dbReference>
<dbReference type="Pfam" id="PF00518">
    <property type="entry name" value="E6"/>
    <property type="match status" value="1"/>
</dbReference>
<dbReference type="SUPFAM" id="SSF161229">
    <property type="entry name" value="E6 C-terminal domain-like"/>
    <property type="match status" value="1"/>
</dbReference>
<gene>
    <name evidence="1" type="primary">E6</name>
</gene>
<keyword id="KW-0010">Activator</keyword>
<keyword id="KW-0238">DNA-binding</keyword>
<keyword id="KW-0244">Early protein</keyword>
<keyword id="KW-1035">Host cytoplasm</keyword>
<keyword id="KW-1048">Host nucleus</keyword>
<keyword id="KW-0945">Host-virus interaction</keyword>
<keyword id="KW-1090">Inhibition of host innate immune response by virus</keyword>
<keyword id="KW-0479">Metal-binding</keyword>
<keyword id="KW-1119">Modulation of host cell apoptosis by virus</keyword>
<keyword id="KW-1185">Reference proteome</keyword>
<keyword id="KW-0804">Transcription</keyword>
<keyword id="KW-0805">Transcription regulation</keyword>
<keyword id="KW-0899">Viral immunoevasion</keyword>
<keyword id="KW-0862">Zinc</keyword>
<keyword id="KW-0863">Zinc-finger</keyword>
<name>VE6_PAPVE</name>
<reference key="1">
    <citation type="journal article" date="1986" name="Gene">
        <title>Organization and expression of the transforming region from the European elk papillomavirus (EEPV).</title>
        <authorList>
            <person name="Ahola H."/>
            <person name="Bergman P."/>
            <person name="Stroem A.C."/>
            <person name="Moreno-Lopez J."/>
            <person name="Petterson U."/>
        </authorList>
    </citation>
    <scope>NUCLEOTIDE SEQUENCE [GENOMIC DNA]</scope>
</reference>
<accession>P11331</accession>
<organismHost>
    <name type="scientific">Cervus elaphus</name>
    <name type="common">Red deer</name>
    <dbReference type="NCBI Taxonomy" id="9860"/>
</organismHost>
<organismHost>
    <name type="scientific">Rangifer tarandus</name>
    <name type="common">Reindeer</name>
    <name type="synonym">Cervus tarandus</name>
    <dbReference type="NCBI Taxonomy" id="9870"/>
</organismHost>
<organism>
    <name type="scientific">European elk papillomavirus</name>
    <name type="common">EEPV</name>
    <dbReference type="NCBI Taxonomy" id="2885846"/>
    <lineage>
        <taxon>Viruses</taxon>
        <taxon>Monodnaviria</taxon>
        <taxon>Shotokuvirae</taxon>
        <taxon>Cossaviricota</taxon>
        <taxon>Papovaviricetes</taxon>
        <taxon>Zurhausenvirales</taxon>
        <taxon>Papillomaviridae</taxon>
        <taxon>Firstpapillomavirinae</taxon>
        <taxon>Deltapapillomavirus</taxon>
        <taxon>Deltapapillomavirus 1</taxon>
    </lineage>
</organism>
<sequence>MCGECYAYLTCIWCKKGLDKVDAKRCHEKKIRIACRNGKHCAVCTSCLENGLYLERSLFPGRPIYPGDLYEPDPWVMFNDIRCMYCGGCLTRDEKERHRLFCEDFWIFRHQVRGRCYLCTRHGSRPPYKETPAAV</sequence>
<evidence type="ECO:0000255" key="1">
    <source>
        <dbReference type="HAMAP-Rule" id="MF_04006"/>
    </source>
</evidence>
<evidence type="ECO:0000305" key="2"/>
<proteinExistence type="inferred from homology"/>